<name>SYW_AGRFC</name>
<gene>
    <name evidence="1" type="primary">trpS</name>
    <name type="ordered locus">Atu0349</name>
    <name type="ORF">AGR_C_611</name>
</gene>
<proteinExistence type="inferred from homology"/>
<organism>
    <name type="scientific">Agrobacterium fabrum (strain C58 / ATCC 33970)</name>
    <name type="common">Agrobacterium tumefaciens (strain C58)</name>
    <dbReference type="NCBI Taxonomy" id="176299"/>
    <lineage>
        <taxon>Bacteria</taxon>
        <taxon>Pseudomonadati</taxon>
        <taxon>Pseudomonadota</taxon>
        <taxon>Alphaproteobacteria</taxon>
        <taxon>Hyphomicrobiales</taxon>
        <taxon>Rhizobiaceae</taxon>
        <taxon>Rhizobium/Agrobacterium group</taxon>
        <taxon>Agrobacterium</taxon>
        <taxon>Agrobacterium tumefaciens complex</taxon>
    </lineage>
</organism>
<evidence type="ECO:0000255" key="1">
    <source>
        <dbReference type="HAMAP-Rule" id="MF_00140"/>
    </source>
</evidence>
<keyword id="KW-0030">Aminoacyl-tRNA synthetase</keyword>
<keyword id="KW-0067">ATP-binding</keyword>
<keyword id="KW-0963">Cytoplasm</keyword>
<keyword id="KW-0436">Ligase</keyword>
<keyword id="KW-0547">Nucleotide-binding</keyword>
<keyword id="KW-0648">Protein biosynthesis</keyword>
<keyword id="KW-1185">Reference proteome</keyword>
<dbReference type="EC" id="6.1.1.2" evidence="1"/>
<dbReference type="EMBL" id="AE007869">
    <property type="protein sequence ID" value="AAK86166.2"/>
    <property type="molecule type" value="Genomic_DNA"/>
</dbReference>
<dbReference type="PIR" id="AE2619">
    <property type="entry name" value="AE2619"/>
</dbReference>
<dbReference type="PIR" id="E97401">
    <property type="entry name" value="E97401"/>
</dbReference>
<dbReference type="RefSeq" id="NP_353381.2">
    <property type="nucleotide sequence ID" value="NC_003062.2"/>
</dbReference>
<dbReference type="RefSeq" id="WP_010970836.1">
    <property type="nucleotide sequence ID" value="NC_003062.2"/>
</dbReference>
<dbReference type="SMR" id="Q8UIE8"/>
<dbReference type="STRING" id="176299.Atu0349"/>
<dbReference type="EnsemblBacteria" id="AAK86166">
    <property type="protein sequence ID" value="AAK86166"/>
    <property type="gene ID" value="Atu0349"/>
</dbReference>
<dbReference type="GeneID" id="1132387"/>
<dbReference type="KEGG" id="atu:Atu0349"/>
<dbReference type="PATRIC" id="fig|176299.10.peg.340"/>
<dbReference type="eggNOG" id="COG0180">
    <property type="taxonomic scope" value="Bacteria"/>
</dbReference>
<dbReference type="HOGENOM" id="CLU_029244_1_4_5"/>
<dbReference type="OrthoDB" id="9801042at2"/>
<dbReference type="PhylomeDB" id="Q8UIE8"/>
<dbReference type="BioCyc" id="AGRO:ATU0349-MONOMER"/>
<dbReference type="Proteomes" id="UP000000813">
    <property type="component" value="Chromosome circular"/>
</dbReference>
<dbReference type="GO" id="GO:0005829">
    <property type="term" value="C:cytosol"/>
    <property type="evidence" value="ECO:0007669"/>
    <property type="project" value="TreeGrafter"/>
</dbReference>
<dbReference type="GO" id="GO:0005524">
    <property type="term" value="F:ATP binding"/>
    <property type="evidence" value="ECO:0007669"/>
    <property type="project" value="UniProtKB-UniRule"/>
</dbReference>
<dbReference type="GO" id="GO:0004830">
    <property type="term" value="F:tryptophan-tRNA ligase activity"/>
    <property type="evidence" value="ECO:0007669"/>
    <property type="project" value="UniProtKB-UniRule"/>
</dbReference>
<dbReference type="GO" id="GO:0006436">
    <property type="term" value="P:tryptophanyl-tRNA aminoacylation"/>
    <property type="evidence" value="ECO:0007669"/>
    <property type="project" value="UniProtKB-UniRule"/>
</dbReference>
<dbReference type="CDD" id="cd00806">
    <property type="entry name" value="TrpRS_core"/>
    <property type="match status" value="1"/>
</dbReference>
<dbReference type="Gene3D" id="3.40.50.620">
    <property type="entry name" value="HUPs"/>
    <property type="match status" value="1"/>
</dbReference>
<dbReference type="Gene3D" id="1.10.240.10">
    <property type="entry name" value="Tyrosyl-Transfer RNA Synthetase"/>
    <property type="match status" value="1"/>
</dbReference>
<dbReference type="HAMAP" id="MF_00140_B">
    <property type="entry name" value="Trp_tRNA_synth_B"/>
    <property type="match status" value="1"/>
</dbReference>
<dbReference type="InterPro" id="IPR001412">
    <property type="entry name" value="aa-tRNA-synth_I_CS"/>
</dbReference>
<dbReference type="InterPro" id="IPR002305">
    <property type="entry name" value="aa-tRNA-synth_Ic"/>
</dbReference>
<dbReference type="InterPro" id="IPR014729">
    <property type="entry name" value="Rossmann-like_a/b/a_fold"/>
</dbReference>
<dbReference type="InterPro" id="IPR002306">
    <property type="entry name" value="Trp-tRNA-ligase"/>
</dbReference>
<dbReference type="InterPro" id="IPR024109">
    <property type="entry name" value="Trp-tRNA-ligase_bac-type"/>
</dbReference>
<dbReference type="InterPro" id="IPR050203">
    <property type="entry name" value="Trp-tRNA_synthetase"/>
</dbReference>
<dbReference type="NCBIfam" id="TIGR00233">
    <property type="entry name" value="trpS"/>
    <property type="match status" value="1"/>
</dbReference>
<dbReference type="PANTHER" id="PTHR43766">
    <property type="entry name" value="TRYPTOPHAN--TRNA LIGASE, MITOCHONDRIAL"/>
    <property type="match status" value="1"/>
</dbReference>
<dbReference type="PANTHER" id="PTHR43766:SF1">
    <property type="entry name" value="TRYPTOPHAN--TRNA LIGASE, MITOCHONDRIAL"/>
    <property type="match status" value="1"/>
</dbReference>
<dbReference type="Pfam" id="PF00579">
    <property type="entry name" value="tRNA-synt_1b"/>
    <property type="match status" value="1"/>
</dbReference>
<dbReference type="PRINTS" id="PR01039">
    <property type="entry name" value="TRNASYNTHTRP"/>
</dbReference>
<dbReference type="SUPFAM" id="SSF52374">
    <property type="entry name" value="Nucleotidylyl transferase"/>
    <property type="match status" value="1"/>
</dbReference>
<dbReference type="PROSITE" id="PS00178">
    <property type="entry name" value="AA_TRNA_LIGASE_I"/>
    <property type="match status" value="1"/>
</dbReference>
<accession>Q8UIE8</accession>
<protein>
    <recommendedName>
        <fullName evidence="1">Tryptophan--tRNA ligase</fullName>
        <ecNumber evidence="1">6.1.1.2</ecNumber>
    </recommendedName>
    <alternativeName>
        <fullName evidence="1">Tryptophanyl-tRNA synthetase</fullName>
        <shortName evidence="1">TrpRS</shortName>
    </alternativeName>
</protein>
<reference key="1">
    <citation type="journal article" date="2001" name="Science">
        <title>The genome of the natural genetic engineer Agrobacterium tumefaciens C58.</title>
        <authorList>
            <person name="Wood D.W."/>
            <person name="Setubal J.C."/>
            <person name="Kaul R."/>
            <person name="Monks D.E."/>
            <person name="Kitajima J.P."/>
            <person name="Okura V.K."/>
            <person name="Zhou Y."/>
            <person name="Chen L."/>
            <person name="Wood G.E."/>
            <person name="Almeida N.F. Jr."/>
            <person name="Woo L."/>
            <person name="Chen Y."/>
            <person name="Paulsen I.T."/>
            <person name="Eisen J.A."/>
            <person name="Karp P.D."/>
            <person name="Bovee D. Sr."/>
            <person name="Chapman P."/>
            <person name="Clendenning J."/>
            <person name="Deatherage G."/>
            <person name="Gillet W."/>
            <person name="Grant C."/>
            <person name="Kutyavin T."/>
            <person name="Levy R."/>
            <person name="Li M.-J."/>
            <person name="McClelland E."/>
            <person name="Palmieri A."/>
            <person name="Raymond C."/>
            <person name="Rouse G."/>
            <person name="Saenphimmachak C."/>
            <person name="Wu Z."/>
            <person name="Romero P."/>
            <person name="Gordon D."/>
            <person name="Zhang S."/>
            <person name="Yoo H."/>
            <person name="Tao Y."/>
            <person name="Biddle P."/>
            <person name="Jung M."/>
            <person name="Krespan W."/>
            <person name="Perry M."/>
            <person name="Gordon-Kamm B."/>
            <person name="Liao L."/>
            <person name="Kim S."/>
            <person name="Hendrick C."/>
            <person name="Zhao Z.-Y."/>
            <person name="Dolan M."/>
            <person name="Chumley F."/>
            <person name="Tingey S.V."/>
            <person name="Tomb J.-F."/>
            <person name="Gordon M.P."/>
            <person name="Olson M.V."/>
            <person name="Nester E.W."/>
        </authorList>
    </citation>
    <scope>NUCLEOTIDE SEQUENCE [LARGE SCALE GENOMIC DNA]</scope>
    <source>
        <strain>C58 / ATCC 33970</strain>
    </source>
</reference>
<reference key="2">
    <citation type="journal article" date="2001" name="Science">
        <title>Genome sequence of the plant pathogen and biotechnology agent Agrobacterium tumefaciens C58.</title>
        <authorList>
            <person name="Goodner B."/>
            <person name="Hinkle G."/>
            <person name="Gattung S."/>
            <person name="Miller N."/>
            <person name="Blanchard M."/>
            <person name="Qurollo B."/>
            <person name="Goldman B.S."/>
            <person name="Cao Y."/>
            <person name="Askenazi M."/>
            <person name="Halling C."/>
            <person name="Mullin L."/>
            <person name="Houmiel K."/>
            <person name="Gordon J."/>
            <person name="Vaudin M."/>
            <person name="Iartchouk O."/>
            <person name="Epp A."/>
            <person name="Liu F."/>
            <person name="Wollam C."/>
            <person name="Allinger M."/>
            <person name="Doughty D."/>
            <person name="Scott C."/>
            <person name="Lappas C."/>
            <person name="Markelz B."/>
            <person name="Flanagan C."/>
            <person name="Crowell C."/>
            <person name="Gurson J."/>
            <person name="Lomo C."/>
            <person name="Sear C."/>
            <person name="Strub G."/>
            <person name="Cielo C."/>
            <person name="Slater S."/>
        </authorList>
    </citation>
    <scope>NUCLEOTIDE SEQUENCE [LARGE SCALE GENOMIC DNA]</scope>
    <source>
        <strain>C58 / ATCC 33970</strain>
    </source>
</reference>
<feature type="chain" id="PRO_0000136596" description="Tryptophan--tRNA ligase">
    <location>
        <begin position="1"/>
        <end position="354"/>
    </location>
</feature>
<feature type="short sequence motif" description="'HIGH' region" evidence="1">
    <location>
        <begin position="14"/>
        <end position="22"/>
    </location>
</feature>
<feature type="short sequence motif" description="'KMSKS' region" evidence="1">
    <location>
        <begin position="217"/>
        <end position="221"/>
    </location>
</feature>
<feature type="binding site" evidence="1">
    <location>
        <begin position="13"/>
        <end position="15"/>
    </location>
    <ligand>
        <name>ATP</name>
        <dbReference type="ChEBI" id="CHEBI:30616"/>
    </ligand>
</feature>
<feature type="binding site" evidence="1">
    <location>
        <begin position="21"/>
        <end position="22"/>
    </location>
    <ligand>
        <name>ATP</name>
        <dbReference type="ChEBI" id="CHEBI:30616"/>
    </ligand>
</feature>
<feature type="binding site" evidence="1">
    <location>
        <position position="137"/>
    </location>
    <ligand>
        <name>L-tryptophan</name>
        <dbReference type="ChEBI" id="CHEBI:57912"/>
    </ligand>
</feature>
<feature type="binding site" evidence="1">
    <location>
        <begin position="149"/>
        <end position="151"/>
    </location>
    <ligand>
        <name>ATP</name>
        <dbReference type="ChEBI" id="CHEBI:30616"/>
    </ligand>
</feature>
<feature type="binding site" evidence="1">
    <location>
        <position position="208"/>
    </location>
    <ligand>
        <name>ATP</name>
        <dbReference type="ChEBI" id="CHEBI:30616"/>
    </ligand>
</feature>
<feature type="binding site" evidence="1">
    <location>
        <begin position="217"/>
        <end position="221"/>
    </location>
    <ligand>
        <name>ATP</name>
        <dbReference type="ChEBI" id="CHEBI:30616"/>
    </ligand>
</feature>
<comment type="function">
    <text evidence="1">Catalyzes the attachment of tryptophan to tRNA(Trp).</text>
</comment>
<comment type="catalytic activity">
    <reaction evidence="1">
        <text>tRNA(Trp) + L-tryptophan + ATP = L-tryptophyl-tRNA(Trp) + AMP + diphosphate + H(+)</text>
        <dbReference type="Rhea" id="RHEA:24080"/>
        <dbReference type="Rhea" id="RHEA-COMP:9671"/>
        <dbReference type="Rhea" id="RHEA-COMP:9705"/>
        <dbReference type="ChEBI" id="CHEBI:15378"/>
        <dbReference type="ChEBI" id="CHEBI:30616"/>
        <dbReference type="ChEBI" id="CHEBI:33019"/>
        <dbReference type="ChEBI" id="CHEBI:57912"/>
        <dbReference type="ChEBI" id="CHEBI:78442"/>
        <dbReference type="ChEBI" id="CHEBI:78535"/>
        <dbReference type="ChEBI" id="CHEBI:456215"/>
        <dbReference type="EC" id="6.1.1.2"/>
    </reaction>
</comment>
<comment type="subunit">
    <text evidence="1">Homodimer.</text>
</comment>
<comment type="subcellular location">
    <subcellularLocation>
        <location evidence="1">Cytoplasm</location>
    </subcellularLocation>
</comment>
<comment type="similarity">
    <text evidence="1">Belongs to the class-I aminoacyl-tRNA synthetase family.</text>
</comment>
<sequence>MNAFKPLVFSGVQPTGNLHLGNYLGAIRKFVALQEDNDCIYCVVDMHAITAQLVHSDLKAQTRSIAAAFIAAGIDPVKHIVFNQSAVPQHAELAWVFNCVARIGWMERMTQFKDKSGKNAEQVSLGLLAYPSLMAADILVYRATHVPVGDDQKQHLELARDIAQKFNIDFGGHIRNAGLGVNITVGDEPVHAYFPMVEPLIGGPAPRVMSLKDGTKKMSKSDPSDLSRINLMDDVDAISKKIKKAKTDPDALPSEVEGLKGRPEAENLVGIYAALSDKTKADVLAEFGGQQFSTFKPALVELAVNVLAPVNNEMRRLLDDPTHIDAILSQGGERARTIAEKTMNEVRDIIGFLR</sequence>